<dbReference type="EMBL" id="AC021043">
    <property type="protein sequence ID" value="AAF88127.1"/>
    <property type="molecule type" value="Genomic_DNA"/>
</dbReference>
<dbReference type="EMBL" id="CP002684">
    <property type="protein sequence ID" value="AEE31039.1"/>
    <property type="molecule type" value="Genomic_DNA"/>
</dbReference>
<dbReference type="EMBL" id="AY091237">
    <property type="protein sequence ID" value="AAM14176.1"/>
    <property type="molecule type" value="mRNA"/>
</dbReference>
<dbReference type="EMBL" id="AY063876">
    <property type="protein sequence ID" value="AAL36232.1"/>
    <property type="molecule type" value="mRNA"/>
</dbReference>
<dbReference type="EMBL" id="AY084670">
    <property type="protein sequence ID" value="AAM61232.1"/>
    <property type="molecule type" value="mRNA"/>
</dbReference>
<dbReference type="PIR" id="A86413">
    <property type="entry name" value="A86413"/>
</dbReference>
<dbReference type="RefSeq" id="NP_174202.1">
    <property type="nucleotide sequence ID" value="NM_102648.4"/>
</dbReference>
<dbReference type="SMR" id="Q9LP37"/>
<dbReference type="FunCoup" id="Q9LP37">
    <property type="interactions" value="791"/>
</dbReference>
<dbReference type="STRING" id="3702.Q9LP37"/>
<dbReference type="PaxDb" id="3702-AT1G29070.1"/>
<dbReference type="ProteomicsDB" id="236196"/>
<dbReference type="EnsemblPlants" id="AT1G29070.1">
    <property type="protein sequence ID" value="AT1G29070.1"/>
    <property type="gene ID" value="AT1G29070"/>
</dbReference>
<dbReference type="GeneID" id="839781"/>
<dbReference type="Gramene" id="AT1G29070.1">
    <property type="protein sequence ID" value="AT1G29070.1"/>
    <property type="gene ID" value="AT1G29070"/>
</dbReference>
<dbReference type="KEGG" id="ath:AT1G29070"/>
<dbReference type="Araport" id="AT1G29070"/>
<dbReference type="TAIR" id="AT1G29070">
    <property type="gene designation" value="PRPL34"/>
</dbReference>
<dbReference type="eggNOG" id="KOG1267">
    <property type="taxonomic scope" value="Eukaryota"/>
</dbReference>
<dbReference type="HOGENOM" id="CLU_114311_0_0_1"/>
<dbReference type="InParanoid" id="Q9LP37"/>
<dbReference type="OMA" id="SQWLTTQ"/>
<dbReference type="OrthoDB" id="431691at2759"/>
<dbReference type="PhylomeDB" id="Q9LP37"/>
<dbReference type="PRO" id="PR:Q9LP37"/>
<dbReference type="Proteomes" id="UP000006548">
    <property type="component" value="Chromosome 1"/>
</dbReference>
<dbReference type="ExpressionAtlas" id="Q9LP37">
    <property type="expression patterns" value="baseline and differential"/>
</dbReference>
<dbReference type="GO" id="GO:0009507">
    <property type="term" value="C:chloroplast"/>
    <property type="evidence" value="ECO:0007669"/>
    <property type="project" value="UniProtKB-SubCell"/>
</dbReference>
<dbReference type="GO" id="GO:1990904">
    <property type="term" value="C:ribonucleoprotein complex"/>
    <property type="evidence" value="ECO:0007669"/>
    <property type="project" value="UniProtKB-KW"/>
</dbReference>
<dbReference type="GO" id="GO:0005840">
    <property type="term" value="C:ribosome"/>
    <property type="evidence" value="ECO:0007669"/>
    <property type="project" value="UniProtKB-KW"/>
</dbReference>
<dbReference type="GO" id="GO:0019843">
    <property type="term" value="F:rRNA binding"/>
    <property type="evidence" value="ECO:0007669"/>
    <property type="project" value="UniProtKB-KW"/>
</dbReference>
<dbReference type="GO" id="GO:0003735">
    <property type="term" value="F:structural constituent of ribosome"/>
    <property type="evidence" value="ECO:0007669"/>
    <property type="project" value="InterPro"/>
</dbReference>
<dbReference type="GO" id="GO:0006412">
    <property type="term" value="P:translation"/>
    <property type="evidence" value="ECO:0007669"/>
    <property type="project" value="InterPro"/>
</dbReference>
<dbReference type="FunFam" id="1.10.287.3980:FF:000002">
    <property type="entry name" value="50S ribosomal protein L34"/>
    <property type="match status" value="1"/>
</dbReference>
<dbReference type="Gene3D" id="1.10.287.3980">
    <property type="match status" value="1"/>
</dbReference>
<dbReference type="HAMAP" id="MF_00391">
    <property type="entry name" value="Ribosomal_bL34"/>
    <property type="match status" value="1"/>
</dbReference>
<dbReference type="InterPro" id="IPR000271">
    <property type="entry name" value="Ribosomal_bL34"/>
</dbReference>
<dbReference type="PANTHER" id="PTHR14503:SF4">
    <property type="entry name" value="LARGE RIBOSOMAL SUBUNIT PROTEIN BL34M"/>
    <property type="match status" value="1"/>
</dbReference>
<dbReference type="PANTHER" id="PTHR14503">
    <property type="entry name" value="MITOCHONDRIAL RIBOSOMAL PROTEIN 34 FAMILY MEMBER"/>
    <property type="match status" value="1"/>
</dbReference>
<dbReference type="Pfam" id="PF00468">
    <property type="entry name" value="Ribosomal_L34"/>
    <property type="match status" value="1"/>
</dbReference>
<feature type="transit peptide" description="Chloroplast" evidence="1">
    <location>
        <begin position="1"/>
        <end position="97"/>
    </location>
</feature>
<feature type="chain" id="PRO_0000249882" description="Large ribosomal subunit protein bL34c">
    <location>
        <begin position="98"/>
        <end position="157"/>
    </location>
</feature>
<gene>
    <name type="primary">RPL34</name>
    <name type="ordered locus">At1g29070</name>
    <name type="ORF">F28N24.22</name>
</gene>
<keyword id="KW-0150">Chloroplast</keyword>
<keyword id="KW-0934">Plastid</keyword>
<keyword id="KW-1185">Reference proteome</keyword>
<keyword id="KW-0687">Ribonucleoprotein</keyword>
<keyword id="KW-0689">Ribosomal protein</keyword>
<keyword id="KW-0694">RNA-binding</keyword>
<keyword id="KW-0699">rRNA-binding</keyword>
<keyword id="KW-0809">Transit peptide</keyword>
<evidence type="ECO:0000250" key="1"/>
<evidence type="ECO:0000303" key="2">
    <source>
    </source>
</evidence>
<evidence type="ECO:0000305" key="3"/>
<name>RK34_ARATH</name>
<protein>
    <recommendedName>
        <fullName evidence="2">Large ribosomal subunit protein bL34c</fullName>
    </recommendedName>
    <alternativeName>
        <fullName>50S ribosomal protein L34, chloroplastic</fullName>
    </alternativeName>
    <alternativeName>
        <fullName>CL34</fullName>
    </alternativeName>
</protein>
<accession>Q9LP37</accession>
<comment type="function">
    <text evidence="1">This protein binds directly to 23S ribosomal RNA.</text>
</comment>
<comment type="subunit">
    <text evidence="1">Part of the 50S ribosomal subunit.</text>
</comment>
<comment type="subcellular location">
    <subcellularLocation>
        <location evidence="1">Plastid</location>
        <location evidence="1">Chloroplast</location>
    </subcellularLocation>
</comment>
<comment type="similarity">
    <text evidence="3">Belongs to the bacterial ribosomal protein bL34 family.</text>
</comment>
<proteinExistence type="evidence at transcript level"/>
<reference key="1">
    <citation type="journal article" date="2000" name="Nature">
        <title>Sequence and analysis of chromosome 1 of the plant Arabidopsis thaliana.</title>
        <authorList>
            <person name="Theologis A."/>
            <person name="Ecker J.R."/>
            <person name="Palm C.J."/>
            <person name="Federspiel N.A."/>
            <person name="Kaul S."/>
            <person name="White O."/>
            <person name="Alonso J."/>
            <person name="Altafi H."/>
            <person name="Araujo R."/>
            <person name="Bowman C.L."/>
            <person name="Brooks S.Y."/>
            <person name="Buehler E."/>
            <person name="Chan A."/>
            <person name="Chao Q."/>
            <person name="Chen H."/>
            <person name="Cheuk R.F."/>
            <person name="Chin C.W."/>
            <person name="Chung M.K."/>
            <person name="Conn L."/>
            <person name="Conway A.B."/>
            <person name="Conway A.R."/>
            <person name="Creasy T.H."/>
            <person name="Dewar K."/>
            <person name="Dunn P."/>
            <person name="Etgu P."/>
            <person name="Feldblyum T.V."/>
            <person name="Feng J.-D."/>
            <person name="Fong B."/>
            <person name="Fujii C.Y."/>
            <person name="Gill J.E."/>
            <person name="Goldsmith A.D."/>
            <person name="Haas B."/>
            <person name="Hansen N.F."/>
            <person name="Hughes B."/>
            <person name="Huizar L."/>
            <person name="Hunter J.L."/>
            <person name="Jenkins J."/>
            <person name="Johnson-Hopson C."/>
            <person name="Khan S."/>
            <person name="Khaykin E."/>
            <person name="Kim C.J."/>
            <person name="Koo H.L."/>
            <person name="Kremenetskaia I."/>
            <person name="Kurtz D.B."/>
            <person name="Kwan A."/>
            <person name="Lam B."/>
            <person name="Langin-Hooper S."/>
            <person name="Lee A."/>
            <person name="Lee J.M."/>
            <person name="Lenz C.A."/>
            <person name="Li J.H."/>
            <person name="Li Y.-P."/>
            <person name="Lin X."/>
            <person name="Liu S.X."/>
            <person name="Liu Z.A."/>
            <person name="Luros J.S."/>
            <person name="Maiti R."/>
            <person name="Marziali A."/>
            <person name="Militscher J."/>
            <person name="Miranda M."/>
            <person name="Nguyen M."/>
            <person name="Nierman W.C."/>
            <person name="Osborne B.I."/>
            <person name="Pai G."/>
            <person name="Peterson J."/>
            <person name="Pham P.K."/>
            <person name="Rizzo M."/>
            <person name="Rooney T."/>
            <person name="Rowley D."/>
            <person name="Sakano H."/>
            <person name="Salzberg S.L."/>
            <person name="Schwartz J.R."/>
            <person name="Shinn P."/>
            <person name="Southwick A.M."/>
            <person name="Sun H."/>
            <person name="Tallon L.J."/>
            <person name="Tambunga G."/>
            <person name="Toriumi M.J."/>
            <person name="Town C.D."/>
            <person name="Utterback T."/>
            <person name="Van Aken S."/>
            <person name="Vaysberg M."/>
            <person name="Vysotskaia V.S."/>
            <person name="Walker M."/>
            <person name="Wu D."/>
            <person name="Yu G."/>
            <person name="Fraser C.M."/>
            <person name="Venter J.C."/>
            <person name="Davis R.W."/>
        </authorList>
    </citation>
    <scope>NUCLEOTIDE SEQUENCE [LARGE SCALE GENOMIC DNA]</scope>
    <source>
        <strain>cv. Columbia</strain>
    </source>
</reference>
<reference key="2">
    <citation type="journal article" date="2017" name="Plant J.">
        <title>Araport11: a complete reannotation of the Arabidopsis thaliana reference genome.</title>
        <authorList>
            <person name="Cheng C.Y."/>
            <person name="Krishnakumar V."/>
            <person name="Chan A.P."/>
            <person name="Thibaud-Nissen F."/>
            <person name="Schobel S."/>
            <person name="Town C.D."/>
        </authorList>
    </citation>
    <scope>GENOME REANNOTATION</scope>
    <source>
        <strain>cv. Columbia</strain>
    </source>
</reference>
<reference key="3">
    <citation type="journal article" date="2003" name="Science">
        <title>Empirical analysis of transcriptional activity in the Arabidopsis genome.</title>
        <authorList>
            <person name="Yamada K."/>
            <person name="Lim J."/>
            <person name="Dale J.M."/>
            <person name="Chen H."/>
            <person name="Shinn P."/>
            <person name="Palm C.J."/>
            <person name="Southwick A.M."/>
            <person name="Wu H.C."/>
            <person name="Kim C.J."/>
            <person name="Nguyen M."/>
            <person name="Pham P.K."/>
            <person name="Cheuk R.F."/>
            <person name="Karlin-Newmann G."/>
            <person name="Liu S.X."/>
            <person name="Lam B."/>
            <person name="Sakano H."/>
            <person name="Wu T."/>
            <person name="Yu G."/>
            <person name="Miranda M."/>
            <person name="Quach H.L."/>
            <person name="Tripp M."/>
            <person name="Chang C.H."/>
            <person name="Lee J.M."/>
            <person name="Toriumi M.J."/>
            <person name="Chan M.M."/>
            <person name="Tang C.C."/>
            <person name="Onodera C.S."/>
            <person name="Deng J.M."/>
            <person name="Akiyama K."/>
            <person name="Ansari Y."/>
            <person name="Arakawa T."/>
            <person name="Banh J."/>
            <person name="Banno F."/>
            <person name="Bowser L."/>
            <person name="Brooks S.Y."/>
            <person name="Carninci P."/>
            <person name="Chao Q."/>
            <person name="Choy N."/>
            <person name="Enju A."/>
            <person name="Goldsmith A.D."/>
            <person name="Gurjal M."/>
            <person name="Hansen N.F."/>
            <person name="Hayashizaki Y."/>
            <person name="Johnson-Hopson C."/>
            <person name="Hsuan V.W."/>
            <person name="Iida K."/>
            <person name="Karnes M."/>
            <person name="Khan S."/>
            <person name="Koesema E."/>
            <person name="Ishida J."/>
            <person name="Jiang P.X."/>
            <person name="Jones T."/>
            <person name="Kawai J."/>
            <person name="Kamiya A."/>
            <person name="Meyers C."/>
            <person name="Nakajima M."/>
            <person name="Narusaka M."/>
            <person name="Seki M."/>
            <person name="Sakurai T."/>
            <person name="Satou M."/>
            <person name="Tamse R."/>
            <person name="Vaysberg M."/>
            <person name="Wallender E.K."/>
            <person name="Wong C."/>
            <person name="Yamamura Y."/>
            <person name="Yuan S."/>
            <person name="Shinozaki K."/>
            <person name="Davis R.W."/>
            <person name="Theologis A."/>
            <person name="Ecker J.R."/>
        </authorList>
    </citation>
    <scope>NUCLEOTIDE SEQUENCE [LARGE SCALE MRNA]</scope>
    <source>
        <strain>cv. Columbia</strain>
    </source>
</reference>
<reference key="4">
    <citation type="submission" date="2002-03" db="EMBL/GenBank/DDBJ databases">
        <title>Full-length cDNA from Arabidopsis thaliana.</title>
        <authorList>
            <person name="Brover V.V."/>
            <person name="Troukhan M.E."/>
            <person name="Alexandrov N.A."/>
            <person name="Lu Y.-P."/>
            <person name="Flavell R.B."/>
            <person name="Feldmann K.A."/>
        </authorList>
    </citation>
    <scope>NUCLEOTIDE SEQUENCE [LARGE SCALE MRNA]</scope>
</reference>
<reference key="5">
    <citation type="journal article" date="2023" name="Plant Cell">
        <title>An updated nomenclature for plant ribosomal protein genes.</title>
        <authorList>
            <person name="Scarpin M.R."/>
            <person name="Busche M."/>
            <person name="Martinez R.E."/>
            <person name="Harper L.C."/>
            <person name="Reiser L."/>
            <person name="Szakonyi D."/>
            <person name="Merchante C."/>
            <person name="Lan T."/>
            <person name="Xiong W."/>
            <person name="Mo B."/>
            <person name="Tang G."/>
            <person name="Chen X."/>
            <person name="Bailey-Serres J."/>
            <person name="Browning K.S."/>
            <person name="Brunkard J.O."/>
        </authorList>
    </citation>
    <scope>NOMENCLATURE</scope>
</reference>
<organism>
    <name type="scientific">Arabidopsis thaliana</name>
    <name type="common">Mouse-ear cress</name>
    <dbReference type="NCBI Taxonomy" id="3702"/>
    <lineage>
        <taxon>Eukaryota</taxon>
        <taxon>Viridiplantae</taxon>
        <taxon>Streptophyta</taxon>
        <taxon>Embryophyta</taxon>
        <taxon>Tracheophyta</taxon>
        <taxon>Spermatophyta</taxon>
        <taxon>Magnoliopsida</taxon>
        <taxon>eudicotyledons</taxon>
        <taxon>Gunneridae</taxon>
        <taxon>Pentapetalae</taxon>
        <taxon>rosids</taxon>
        <taxon>malvids</taxon>
        <taxon>Brassicales</taxon>
        <taxon>Brassicaceae</taxon>
        <taxon>Camelineae</taxon>
        <taxon>Arabidopsis</taxon>
    </lineage>
</organism>
<sequence length="157" mass="16741">MASLSTSVVASASSRLWNPAASNGKICVPSASLSLRTGCRRSSSSLTSSASSQLLHCSFLSSPVSLASPFSGLSIAFDLSSQTSGLNGQRRRGLVVRAGKAALCQTKRSRSRKSLARTHGFRRRMRTTSGRATIKRRRAKGRWNLCPKSNPSSGKRA</sequence>